<proteinExistence type="inferred from homology"/>
<comment type="function">
    <text evidence="1">Catalyzes the dehydration of methylthioribulose-1-phosphate (MTRu-1-P) into 2,3-diketo-5-methylthiopentyl-1-phosphate (DK-MTP-1-P).</text>
</comment>
<comment type="catalytic activity">
    <reaction evidence="1">
        <text>5-(methylsulfanyl)-D-ribulose 1-phosphate = 5-methylsulfanyl-2,3-dioxopentyl phosphate + H2O</text>
        <dbReference type="Rhea" id="RHEA:15549"/>
        <dbReference type="ChEBI" id="CHEBI:15377"/>
        <dbReference type="ChEBI" id="CHEBI:58548"/>
        <dbReference type="ChEBI" id="CHEBI:58828"/>
        <dbReference type="EC" id="4.2.1.109"/>
    </reaction>
</comment>
<comment type="cofactor">
    <cofactor evidence="1">
        <name>Zn(2+)</name>
        <dbReference type="ChEBI" id="CHEBI:29105"/>
    </cofactor>
    <text evidence="1">Binds 1 zinc ion per subunit.</text>
</comment>
<comment type="pathway">
    <text evidence="1">Amino-acid biosynthesis; L-methionine biosynthesis via salvage pathway; L-methionine from S-methyl-5-thio-alpha-D-ribose 1-phosphate: step 2/6.</text>
</comment>
<comment type="similarity">
    <text evidence="1">Belongs to the aldolase class II family. MtnB subfamily.</text>
</comment>
<evidence type="ECO:0000255" key="1">
    <source>
        <dbReference type="HAMAP-Rule" id="MF_01677"/>
    </source>
</evidence>
<organism>
    <name type="scientific">Xylella fastidiosa (strain Temecula1 / ATCC 700964)</name>
    <dbReference type="NCBI Taxonomy" id="183190"/>
    <lineage>
        <taxon>Bacteria</taxon>
        <taxon>Pseudomonadati</taxon>
        <taxon>Pseudomonadota</taxon>
        <taxon>Gammaproteobacteria</taxon>
        <taxon>Lysobacterales</taxon>
        <taxon>Lysobacteraceae</taxon>
        <taxon>Xylella</taxon>
    </lineage>
</organism>
<sequence>MNATCTPSLPYDASRLRELAHLLIGTISEFAQAGWTPATSSNFSHRLDEHHVAITVSGRDKRCLREEDIMAVDLDGNAVGHPHTPSAETLLHTQLYRRFPEIGCVLHTHSLTQTVASRVYAGAGHISLKDYELLKAFAGHSTHETTLDVPVFCNTQNMNILAAQVDTLLDKQRMWGYLINGHGMYTWGNTLADARRHLEALEFLLHCELDLLKLRGYL</sequence>
<gene>
    <name evidence="1" type="primary">mtnB</name>
    <name type="synonym">fucA2</name>
    <name type="ordered locus">PD_1258</name>
</gene>
<dbReference type="EC" id="4.2.1.109" evidence="1"/>
<dbReference type="EMBL" id="AE009442">
    <property type="protein sequence ID" value="AAO29107.1"/>
    <property type="molecule type" value="Genomic_DNA"/>
</dbReference>
<dbReference type="RefSeq" id="WP_004088323.1">
    <property type="nucleotide sequence ID" value="NC_004556.1"/>
</dbReference>
<dbReference type="SMR" id="Q87C38"/>
<dbReference type="KEGG" id="xft:PD_1258"/>
<dbReference type="HOGENOM" id="CLU_006033_4_1_6"/>
<dbReference type="UniPathway" id="UPA00904">
    <property type="reaction ID" value="UER00875"/>
</dbReference>
<dbReference type="Proteomes" id="UP000002516">
    <property type="component" value="Chromosome"/>
</dbReference>
<dbReference type="GO" id="GO:0005737">
    <property type="term" value="C:cytoplasm"/>
    <property type="evidence" value="ECO:0007669"/>
    <property type="project" value="InterPro"/>
</dbReference>
<dbReference type="GO" id="GO:0046570">
    <property type="term" value="F:methylthioribulose 1-phosphate dehydratase activity"/>
    <property type="evidence" value="ECO:0007669"/>
    <property type="project" value="UniProtKB-UniRule"/>
</dbReference>
<dbReference type="GO" id="GO:0008270">
    <property type="term" value="F:zinc ion binding"/>
    <property type="evidence" value="ECO:0007669"/>
    <property type="project" value="UniProtKB-UniRule"/>
</dbReference>
<dbReference type="GO" id="GO:0019509">
    <property type="term" value="P:L-methionine salvage from methylthioadenosine"/>
    <property type="evidence" value="ECO:0007669"/>
    <property type="project" value="UniProtKB-UniRule"/>
</dbReference>
<dbReference type="GO" id="GO:0005996">
    <property type="term" value="P:monosaccharide metabolic process"/>
    <property type="evidence" value="ECO:0007669"/>
    <property type="project" value="UniProtKB-ARBA"/>
</dbReference>
<dbReference type="Gene3D" id="3.40.225.10">
    <property type="entry name" value="Class II aldolase/adducin N-terminal domain"/>
    <property type="match status" value="1"/>
</dbReference>
<dbReference type="HAMAP" id="MF_01677">
    <property type="entry name" value="Salvage_MtnB"/>
    <property type="match status" value="1"/>
</dbReference>
<dbReference type="InterPro" id="IPR001303">
    <property type="entry name" value="Aldolase_II/adducin_N"/>
</dbReference>
<dbReference type="InterPro" id="IPR036409">
    <property type="entry name" value="Aldolase_II/adducin_N_sf"/>
</dbReference>
<dbReference type="InterPro" id="IPR017714">
    <property type="entry name" value="MethylthioRu-1-P_deHdtase_MtnB"/>
</dbReference>
<dbReference type="NCBIfam" id="NF006672">
    <property type="entry name" value="PRK09220.1"/>
    <property type="match status" value="1"/>
</dbReference>
<dbReference type="NCBIfam" id="TIGR03328">
    <property type="entry name" value="salvage_mtnB"/>
    <property type="match status" value="1"/>
</dbReference>
<dbReference type="PANTHER" id="PTHR10640">
    <property type="entry name" value="METHYLTHIORIBULOSE-1-PHOSPHATE DEHYDRATASE"/>
    <property type="match status" value="1"/>
</dbReference>
<dbReference type="PANTHER" id="PTHR10640:SF7">
    <property type="entry name" value="METHYLTHIORIBULOSE-1-PHOSPHATE DEHYDRATASE"/>
    <property type="match status" value="1"/>
</dbReference>
<dbReference type="Pfam" id="PF00596">
    <property type="entry name" value="Aldolase_II"/>
    <property type="match status" value="1"/>
</dbReference>
<dbReference type="SMART" id="SM01007">
    <property type="entry name" value="Aldolase_II"/>
    <property type="match status" value="1"/>
</dbReference>
<dbReference type="SUPFAM" id="SSF53639">
    <property type="entry name" value="AraD/HMP-PK domain-like"/>
    <property type="match status" value="1"/>
</dbReference>
<accession>Q87C38</accession>
<reference key="1">
    <citation type="journal article" date="2003" name="J. Bacteriol.">
        <title>Comparative analyses of the complete genome sequences of Pierce's disease and citrus variegated chlorosis strains of Xylella fastidiosa.</title>
        <authorList>
            <person name="Van Sluys M.A."/>
            <person name="de Oliveira M.C."/>
            <person name="Monteiro-Vitorello C.B."/>
            <person name="Miyaki C.Y."/>
            <person name="Furlan L.R."/>
            <person name="Camargo L.E.A."/>
            <person name="da Silva A.C.R."/>
            <person name="Moon D.H."/>
            <person name="Takita M.A."/>
            <person name="Lemos E.G.M."/>
            <person name="Machado M.A."/>
            <person name="Ferro M.I.T."/>
            <person name="da Silva F.R."/>
            <person name="Goldman M.H.S."/>
            <person name="Goldman G.H."/>
            <person name="Lemos M.V.F."/>
            <person name="El-Dorry H."/>
            <person name="Tsai S.M."/>
            <person name="Carrer H."/>
            <person name="Carraro D.M."/>
            <person name="de Oliveira R.C."/>
            <person name="Nunes L.R."/>
            <person name="Siqueira W.J."/>
            <person name="Coutinho L.L."/>
            <person name="Kimura E.T."/>
            <person name="Ferro E.S."/>
            <person name="Harakava R."/>
            <person name="Kuramae E.E."/>
            <person name="Marino C.L."/>
            <person name="Giglioti E."/>
            <person name="Abreu I.L."/>
            <person name="Alves L.M.C."/>
            <person name="do Amaral A.M."/>
            <person name="Baia G.S."/>
            <person name="Blanco S.R."/>
            <person name="Brito M.S."/>
            <person name="Cannavan F.S."/>
            <person name="Celestino A.V."/>
            <person name="da Cunha A.F."/>
            <person name="Fenille R.C."/>
            <person name="Ferro J.A."/>
            <person name="Formighieri E.F."/>
            <person name="Kishi L.T."/>
            <person name="Leoni S.G."/>
            <person name="Oliveira A.R."/>
            <person name="Rosa V.E. Jr."/>
            <person name="Sassaki F.T."/>
            <person name="Sena J.A.D."/>
            <person name="de Souza A.A."/>
            <person name="Truffi D."/>
            <person name="Tsukumo F."/>
            <person name="Yanai G.M."/>
            <person name="Zaros L.G."/>
            <person name="Civerolo E.L."/>
            <person name="Simpson A.J.G."/>
            <person name="Almeida N.F. Jr."/>
            <person name="Setubal J.C."/>
            <person name="Kitajima J.P."/>
        </authorList>
    </citation>
    <scope>NUCLEOTIDE SEQUENCE [LARGE SCALE GENOMIC DNA]</scope>
    <source>
        <strain>Temecula1 / ATCC 700964</strain>
    </source>
</reference>
<name>MTNB_XYLFT</name>
<feature type="chain" id="PRO_0000357121" description="Methylthioribulose-1-phosphate dehydratase">
    <location>
        <begin position="1"/>
        <end position="218"/>
    </location>
</feature>
<feature type="binding site" evidence="1">
    <location>
        <position position="107"/>
    </location>
    <ligand>
        <name>Zn(2+)</name>
        <dbReference type="ChEBI" id="CHEBI:29105"/>
    </ligand>
</feature>
<feature type="binding site" evidence="1">
    <location>
        <position position="109"/>
    </location>
    <ligand>
        <name>Zn(2+)</name>
        <dbReference type="ChEBI" id="CHEBI:29105"/>
    </ligand>
</feature>
<protein>
    <recommendedName>
        <fullName evidence="1">Methylthioribulose-1-phosphate dehydratase</fullName>
        <shortName evidence="1">MTRu-1-P dehydratase</shortName>
        <ecNumber evidence="1">4.2.1.109</ecNumber>
    </recommendedName>
</protein>
<keyword id="KW-0028">Amino-acid biosynthesis</keyword>
<keyword id="KW-0456">Lyase</keyword>
<keyword id="KW-0479">Metal-binding</keyword>
<keyword id="KW-0486">Methionine biosynthesis</keyword>
<keyword id="KW-1185">Reference proteome</keyword>
<keyword id="KW-0862">Zinc</keyword>